<protein>
    <recommendedName>
        <fullName>Motilin</fullName>
    </recommendedName>
</protein>
<organism>
    <name type="scientific">Canis lupus familiaris</name>
    <name type="common">Dog</name>
    <name type="synonym">Canis familiaris</name>
    <dbReference type="NCBI Taxonomy" id="9615"/>
    <lineage>
        <taxon>Eukaryota</taxon>
        <taxon>Metazoa</taxon>
        <taxon>Chordata</taxon>
        <taxon>Craniata</taxon>
        <taxon>Vertebrata</taxon>
        <taxon>Euteleostomi</taxon>
        <taxon>Mammalia</taxon>
        <taxon>Eutheria</taxon>
        <taxon>Laurasiatheria</taxon>
        <taxon>Carnivora</taxon>
        <taxon>Caniformia</taxon>
        <taxon>Canidae</taxon>
        <taxon>Canis</taxon>
    </lineage>
</organism>
<evidence type="ECO:0000256" key="1">
    <source>
        <dbReference type="SAM" id="MobiDB-lite"/>
    </source>
</evidence>
<evidence type="ECO:0000305" key="2"/>
<reference key="1">
    <citation type="journal article" date="1983" name="Regul. Pept.">
        <title>Purification and characterization of canine intestinal motilin.</title>
        <authorList>
            <person name="Poitras P."/>
            <person name="Reeve J.R. Jr."/>
            <person name="Hunkapiller M.W."/>
            <person name="Hood L.E."/>
            <person name="Walsh J.H."/>
        </authorList>
    </citation>
    <scope>PROTEIN SEQUENCE</scope>
    <source>
        <tissue>Intestine</tissue>
    </source>
</reference>
<reference key="2">
    <citation type="submission" date="2004-06" db="EMBL/GenBank/DDBJ databases">
        <title>Canis familiaris motilin mRNA, partial sequence (mature motilin).</title>
        <authorList>
            <person name="Oh H."/>
            <person name="Huh C."/>
            <person name="Baek Y."/>
        </authorList>
    </citation>
    <scope>NUCLEOTIDE SEQUENCE [MRNA]</scope>
</reference>
<gene>
    <name type="primary">MLN</name>
</gene>
<feature type="peptide" id="PRO_0000044065" description="Motilin">
    <location>
        <begin position="1"/>
        <end position="22"/>
    </location>
</feature>
<feature type="region of interest" description="Disordered" evidence="1">
    <location>
        <begin position="1"/>
        <end position="22"/>
    </location>
</feature>
<feature type="compositionally biased region" description="Basic and acidic residues" evidence="1">
    <location>
        <begin position="9"/>
        <end position="22"/>
    </location>
</feature>
<feature type="unsure residue">
    <location>
        <position position="1"/>
    </location>
</feature>
<accession>P19863</accession>
<accession>Q4L0E5</accession>
<name>MOTI_CANLF</name>
<dbReference type="EMBL" id="AY651885">
    <property type="protein sequence ID" value="AAT72899.1"/>
    <property type="molecule type" value="mRNA"/>
</dbReference>
<dbReference type="PIR" id="S00189">
    <property type="entry name" value="S00189"/>
</dbReference>
<dbReference type="FunCoup" id="P19863">
    <property type="interactions" value="20"/>
</dbReference>
<dbReference type="STRING" id="9615.ENSCAFP00000056335"/>
<dbReference type="PaxDb" id="9612-ENSCAFP00000001703"/>
<dbReference type="eggNOG" id="ENOG502SS7F">
    <property type="taxonomic scope" value="Eukaryota"/>
</dbReference>
<dbReference type="InParanoid" id="P19863"/>
<dbReference type="OrthoDB" id="9937685at2759"/>
<dbReference type="Proteomes" id="UP000002254">
    <property type="component" value="Unplaced"/>
</dbReference>
<dbReference type="Proteomes" id="UP000694429">
    <property type="component" value="Unplaced"/>
</dbReference>
<dbReference type="Proteomes" id="UP000694542">
    <property type="component" value="Unplaced"/>
</dbReference>
<dbReference type="Proteomes" id="UP000805418">
    <property type="component" value="Unplaced"/>
</dbReference>
<dbReference type="GO" id="GO:0005576">
    <property type="term" value="C:extracellular region"/>
    <property type="evidence" value="ECO:0007669"/>
    <property type="project" value="UniProtKB-SubCell"/>
</dbReference>
<dbReference type="GO" id="GO:0005179">
    <property type="term" value="F:hormone activity"/>
    <property type="evidence" value="ECO:0007669"/>
    <property type="project" value="UniProtKB-KW"/>
</dbReference>
<dbReference type="InterPro" id="IPR006738">
    <property type="entry name" value="Motilin_ghrelin"/>
</dbReference>
<dbReference type="Pfam" id="PF04644">
    <property type="entry name" value="Motilin_ghrelin"/>
    <property type="match status" value="1"/>
</dbReference>
<keyword id="KW-0903">Direct protein sequencing</keyword>
<keyword id="KW-0372">Hormone</keyword>
<keyword id="KW-1185">Reference proteome</keyword>
<keyword id="KW-0964">Secreted</keyword>
<sequence>FVPIFTHSELQKIREKERNKGQ</sequence>
<proteinExistence type="evidence at protein level"/>
<comment type="function">
    <text>Plays an important role in the regulation of interdigestive gastrointestinal motility and indirectly causes rhythmic contraction of duodenal and colonic smooth muscle.</text>
</comment>
<comment type="subcellular location">
    <subcellularLocation>
        <location>Secreted</location>
    </subcellularLocation>
</comment>
<comment type="similarity">
    <text evidence="2">Belongs to the motilin family.</text>
</comment>